<evidence type="ECO:0000255" key="1">
    <source>
        <dbReference type="PROSITE-ProRule" id="PRU00145"/>
    </source>
</evidence>
<evidence type="ECO:0000255" key="2">
    <source>
        <dbReference type="PROSITE-ProRule" id="PRU00288"/>
    </source>
</evidence>
<evidence type="ECO:0000256" key="3">
    <source>
        <dbReference type="SAM" id="MobiDB-lite"/>
    </source>
</evidence>
<evidence type="ECO:0000269" key="4">
    <source>
    </source>
</evidence>
<evidence type="ECO:0000269" key="5">
    <source>
    </source>
</evidence>
<evidence type="ECO:0000269" key="6">
    <source>
    </source>
</evidence>
<evidence type="ECO:0000269" key="7">
    <source>
    </source>
</evidence>
<evidence type="ECO:0000269" key="8">
    <source>
    </source>
</evidence>
<evidence type="ECO:0000269" key="9">
    <source>
    </source>
</evidence>
<evidence type="ECO:0000269" key="10">
    <source>
    </source>
</evidence>
<evidence type="ECO:0000269" key="11">
    <source>
    </source>
</evidence>
<evidence type="ECO:0000305" key="12"/>
<evidence type="ECO:0007744" key="13">
    <source>
    </source>
</evidence>
<evidence type="ECO:0007829" key="14">
    <source>
        <dbReference type="PDB" id="3JUE"/>
    </source>
</evidence>
<evidence type="ECO:0007829" key="15">
    <source>
        <dbReference type="PDB" id="3T9K"/>
    </source>
</evidence>
<evidence type="ECO:0007829" key="16">
    <source>
        <dbReference type="PDB" id="4NSW"/>
    </source>
</evidence>
<accession>Q15027</accession>
<accession>Q53XN9</accession>
<name>ACAP1_HUMAN</name>
<comment type="function">
    <text evidence="4 5 8 9 10">GTPase-activating protein (GAP) for ADP ribosylation factor 6 (ARF6) required for clathrin-dependent export of proteins from recycling endosomes to trans-Golgi network and cell surface. Required for regulated export of ITGB1 from recycling endosomes to the cell surface and ITGB1-dependent cell migration.</text>
</comment>
<comment type="activity regulation">
    <text evidence="4">GAP activity stimulated by phosphatidylinositol 4,5-bisphosphate (PIP2) and phosphatidic acid.</text>
</comment>
<comment type="subunit">
    <text evidence="5 7 8 9 10 11">Banana-shaped homodimer laterally assembling into tetramers, the tetramers further pack helically onto the membrane. Interacts with GTP-bound ARF6. Interacts with third cytoplasmic loop of SLC2A4/GLUT4. Interacts with CLTC. Interacts with GULP1. Forms a complex with GDP-bound ARF6 and GULP1. Interacts with ITGB1; required for ITGB1 recycling.</text>
</comment>
<comment type="interaction">
    <interactant intactId="EBI-751746">
        <id>Q15027</id>
    </interactant>
    <interactant intactId="EBI-11958845">
        <id>O94868-3</id>
        <label>FCHSD2</label>
    </interactant>
    <organismsDiffer>false</organismsDiffer>
    <experiments>3</experiments>
</comment>
<comment type="interaction">
    <interactant intactId="EBI-751746">
        <id>Q15027</id>
    </interactant>
    <interactant intactId="EBI-401755">
        <id>P62993</id>
        <label>GRB2</label>
    </interactant>
    <organismsDiffer>false</organismsDiffer>
    <experiments>3</experiments>
</comment>
<comment type="interaction">
    <interactant intactId="EBI-751746">
        <id>Q15027</id>
    </interactant>
    <interactant intactId="EBI-399080">
        <id>Q92993</id>
        <label>KAT5</label>
    </interactant>
    <organismsDiffer>false</organismsDiffer>
    <experiments>3</experiments>
</comment>
<comment type="interaction">
    <interactant intactId="EBI-751746">
        <id>Q15027</id>
    </interactant>
    <interactant intactId="EBI-11742507">
        <id>Q8TAP4-4</id>
        <label>LMO3</label>
    </interactant>
    <organismsDiffer>false</organismsDiffer>
    <experiments>3</experiments>
</comment>
<comment type="interaction">
    <interactant intactId="EBI-751746">
        <id>Q15027</id>
    </interactant>
    <interactant intactId="EBI-2880203">
        <id>O76041</id>
        <label>NEBL</label>
    </interactant>
    <organismsDiffer>false</organismsDiffer>
    <experiments>3</experiments>
</comment>
<comment type="interaction">
    <interactant intactId="EBI-751746">
        <id>Q15027</id>
    </interactant>
    <interactant intactId="EBI-1383528">
        <id>P17252</id>
        <label>PRKCA</label>
    </interactant>
    <organismsDiffer>false</organismsDiffer>
    <experiments>3</experiments>
</comment>
<comment type="interaction">
    <interactant intactId="EBI-751746">
        <id>Q15027</id>
    </interactant>
    <interactant intactId="EBI-9090795">
        <id>Q15047-2</id>
        <label>SETDB1</label>
    </interactant>
    <organismsDiffer>false</organismsDiffer>
    <experiments>3</experiments>
</comment>
<comment type="interaction">
    <interactant intactId="EBI-751746">
        <id>Q15027</id>
    </interactant>
    <interactant intactId="EBI-743128">
        <id>P14927</id>
        <label>UQCRB</label>
    </interactant>
    <organismsDiffer>false</organismsDiffer>
    <experiments>3</experiments>
</comment>
<comment type="interaction">
    <interactant intactId="EBI-751746">
        <id>Q15027</id>
    </interactant>
    <interactant intactId="EBI-1051424">
        <id>P22695</id>
        <label>UQCRC2</label>
    </interactant>
    <organismsDiffer>false</organismsDiffer>
    <experiments>3</experiments>
</comment>
<comment type="interaction">
    <interactant intactId="EBI-751746">
        <id>Q15027</id>
    </interactant>
    <interactant intactId="EBI-359832">
        <id>P61981</id>
        <label>YWHAG</label>
    </interactant>
    <organismsDiffer>false</organismsDiffer>
    <experiments>3</experiments>
</comment>
<comment type="subcellular location">
    <subcellularLocation>
        <location evidence="5">Recycling endosome membrane</location>
        <topology evidence="5">Peripheral membrane protein</topology>
        <orientation evidence="5">Cytoplasmic side</orientation>
    </subcellularLocation>
</comment>
<comment type="tissue specificity">
    <text evidence="4">Highest level in lung and spleen. Low level in heart, kidney, liver and pancreas.</text>
</comment>
<comment type="domain">
    <text evidence="11">PH domain binds phospholipids including phosphatidic acid, phosphatidylinositol 3-phosphate, phosphatidylinositol 3,5-bisphosphate (PIP2) and phosphatidylinositol 3,4,5-trisphosphate (PIP3). May mediate ACAP1-binding to PIP2 or PIP3 containing membranes. Only one PH domain of one ACAP1 dimer inserts into the membrane, while the other PH domain acts primaryly to interact with adjacent ACAP1 dimers.</text>
</comment>
<comment type="domain">
    <text evidence="11">The BAR domain mediates homodimerization, it can neither bind membrane nor impart curvature, but instead requires the neighboring PH domain to achieve these functions.</text>
</comment>
<comment type="PTM">
    <text evidence="5">Phosphorylation at Ser-554 by PKB is required for interaction with ITGB1, export of ITGB1 from recycling endosomes to the cell surface and ITGB1-dependent cell migration.</text>
</comment>
<comment type="miscellaneous">
    <text>Cells overexpressing ACAP1 show an accumulation of ITGB1 in recycling endosomes and inhibition of stimulation-dependent cell migration. Cells with reduced levels of ACAP1 or AKT1 and AKT2 show inhibition of stimulation-dependent cell migration. Cells overexpressing ACAP1 and PIP5K1C show formation of tubular structures derived from endosomal membranes.</text>
</comment>
<comment type="sequence caution" evidence="12">
    <conflict type="erroneous initiation">
        <sequence resource="EMBL-CDS" id="BAA06418"/>
    </conflict>
    <text>Extended N-terminus.</text>
</comment>
<protein>
    <recommendedName>
        <fullName>Arf-GAP with coiled-coil, ANK repeat and PH domain-containing protein 1</fullName>
    </recommendedName>
    <alternativeName>
        <fullName>Centaurin-beta-1</fullName>
        <shortName>Cnt-b1</shortName>
    </alternativeName>
</protein>
<reference key="1">
    <citation type="journal article" date="1994" name="DNA Res.">
        <title>Prediction of the coding sequences of unidentified human genes. II. The coding sequences of 40 new genes (KIAA0041-KIAA0080) deduced by analysis of cDNA clones from human cell line KG-1.</title>
        <authorList>
            <person name="Nomura N."/>
            <person name="Nagase T."/>
            <person name="Miyajima N."/>
            <person name="Sazuka T."/>
            <person name="Tanaka A."/>
            <person name="Sato S."/>
            <person name="Seki N."/>
            <person name="Kawarabayasi Y."/>
            <person name="Ishikawa K."/>
            <person name="Tabata S."/>
        </authorList>
    </citation>
    <scope>NUCLEOTIDE SEQUENCE [LARGE SCALE MRNA]</scope>
    <source>
        <tissue>Bone marrow</tissue>
    </source>
</reference>
<reference key="2">
    <citation type="submission" date="2003-08" db="EMBL/GenBank/DDBJ databases">
        <title>Cloning of human full-length CDSs in BD Creator(TM) system donor vector.</title>
        <authorList>
            <person name="Kalnine N."/>
            <person name="Chen X."/>
            <person name="Rolfs A."/>
            <person name="Halleck A."/>
            <person name="Hines L."/>
            <person name="Eisenstein S."/>
            <person name="Koundinya M."/>
            <person name="Raphael J."/>
            <person name="Moreira D."/>
            <person name="Kelley T."/>
            <person name="LaBaer J."/>
            <person name="Lin Y."/>
            <person name="Phelan M."/>
            <person name="Farmer A."/>
        </authorList>
    </citation>
    <scope>NUCLEOTIDE SEQUENCE [LARGE SCALE MRNA]</scope>
</reference>
<reference key="3">
    <citation type="journal article" date="2004" name="Genome Res.">
        <title>The status, quality, and expansion of the NIH full-length cDNA project: the Mammalian Gene Collection (MGC).</title>
        <authorList>
            <consortium name="The MGC Project Team"/>
        </authorList>
    </citation>
    <scope>NUCLEOTIDE SEQUENCE [LARGE SCALE MRNA]</scope>
    <source>
        <tissue>Lymph</tissue>
    </source>
</reference>
<reference key="4">
    <citation type="journal article" date="2000" name="J. Cell Biol.">
        <title>ACAPs are arf6 GTPase-activating proteins that function in the cell periphery.</title>
        <authorList>
            <person name="Jackson T.R."/>
            <person name="Brown F.D."/>
            <person name="Nie Z."/>
            <person name="Miura K."/>
            <person name="Foroni L."/>
            <person name="Sun J."/>
            <person name="Hsu V.W."/>
            <person name="Donaldson J.G."/>
            <person name="Randazzo P.A."/>
        </authorList>
    </citation>
    <scope>FUNCTION</scope>
    <scope>ACTIVITY REGULATION</scope>
    <scope>TISSUE SPECIFICITY</scope>
    <scope>MUTAGENESIS OF ARG-448</scope>
</reference>
<reference key="5">
    <citation type="journal article" date="2005" name="Dev. Cell">
        <title>Phosphorylation of ACAP1 by Akt regulates the stimulation-dependent recycling of integrin beta1 to control cell migration.</title>
        <authorList>
            <person name="Li J."/>
            <person name="Ballif B.A."/>
            <person name="Powelka A.M."/>
            <person name="Dai J."/>
            <person name="Gygi S.P."/>
            <person name="Hsu V.W."/>
        </authorList>
    </citation>
    <scope>FUNCTION</scope>
    <scope>PHOSPHORYLATION AT SER-554</scope>
    <scope>IDENTIFICATION BY MASS SPECTROMETRY</scope>
    <scope>INTERACTION WITH ITGB1</scope>
    <scope>SUBCELLULAR LOCATION</scope>
    <scope>MUTAGENESIS OF SER-14; SER-29; SER-277; THR-289; SER-358; THR-389; THR-461; SER-554; SER-568; THR-711; TYR-712 AND SER-724</scope>
</reference>
<reference key="6">
    <citation type="journal article" date="2006" name="Anal. Biochem.">
        <title>Nitroproteins from a human pituitary adenoma tissue discovered with a nitrotyrosine affinity column and tandem mass spectrometry.</title>
        <authorList>
            <person name="Zhan X."/>
            <person name="Desiderio D.M."/>
        </authorList>
    </citation>
    <scope>NITRATION [LARGE SCALE ANALYSIS] AT TYR-485</scope>
    <scope>IDENTIFICATION BY MASS SPECTROMETRY [LARGE SCALE ANALYSIS]</scope>
    <source>
        <tissue>Pituitary adenoma</tissue>
    </source>
</reference>
<reference key="7">
    <citation type="journal article" date="2006" name="Traffic">
        <title>Cooperation of phosphoinositides and BAR domain proteins in endosomal tubulation.</title>
        <authorList>
            <person name="Shinozaki-Narikawa N."/>
            <person name="Kodama T."/>
            <person name="Shibasaki Y."/>
        </authorList>
    </citation>
    <scope>INTERACTION WITH PHOSPHOLIPIDS</scope>
    <scope>MUTAGENESIS OF LYS-274</scope>
</reference>
<reference key="8">
    <citation type="journal article" date="2007" name="Curr. Biol.">
        <title>Regulation of Arf6 and ACAP1 signaling by the PTB-domain-containing adaptor protein GULP.</title>
        <authorList>
            <person name="Ma Z."/>
            <person name="Nie Z."/>
            <person name="Luo R."/>
            <person name="Casanova J.E."/>
            <person name="Ravichandran K.S."/>
        </authorList>
    </citation>
    <scope>FUNCTION</scope>
    <scope>INTERACTION WITH GULP AND ARF6</scope>
    <scope>MUTAGENESIS OF ARG-448</scope>
</reference>
<reference key="9">
    <citation type="journal article" date="2007" name="J. Cell Biol.">
        <title>An ACAP1-containing clathrin coat complex for endocytic recycling.</title>
        <authorList>
            <person name="Li J."/>
            <person name="Peters P.J."/>
            <person name="Bai M."/>
            <person name="Dai J."/>
            <person name="Bos E."/>
            <person name="Kirchhausen T."/>
            <person name="Kandror K.V."/>
            <person name="Hsu V.W."/>
        </authorList>
    </citation>
    <scope>FUNCTION</scope>
    <scope>INTERACTION WITH CLTC</scope>
</reference>
<reference key="10">
    <citation type="journal article" date="2012" name="J. Biol. Chem.">
        <title>Mechanistic insights into regulated cargo binding by ACAP1 protein.</title>
        <authorList>
            <person name="Bai M."/>
            <person name="Pang X."/>
            <person name="Lou J."/>
            <person name="Zhou Q."/>
            <person name="Zhang K."/>
            <person name="Ma J."/>
            <person name="Li J."/>
            <person name="Sun F."/>
            <person name="Hsu V.W."/>
        </authorList>
    </citation>
    <scope>X-RAY CRYSTALLOGRAPHY (2.30 ANGSTROMS) OF 378-740 WILD TYPE AND MUTANT ASP-554 IN COMPLEX WITH ITGB1 PEPTIDE AND ZINC IONS</scope>
    <scope>FUNCTION</scope>
    <scope>INTERACTION WITH ITGB1</scope>
    <scope>MUTAGENESIS OF SER-554</scope>
</reference>
<reference key="11">
    <citation type="journal article" date="2014" name="Dev. Cell">
        <title>A PH domain in ACAP1 possesses key features of the BAR domain in promoting membrane curvature.</title>
        <authorList>
            <person name="Pang X."/>
            <person name="Fan J."/>
            <person name="Zhang Y."/>
            <person name="Zhang K."/>
            <person name="Gao B."/>
            <person name="Ma J."/>
            <person name="Li J."/>
            <person name="Deng Y."/>
            <person name="Zhou Q."/>
            <person name="Egelman E.H."/>
            <person name="Hsu V.W."/>
            <person name="Sun F."/>
        </authorList>
    </citation>
    <scope>X-RAY CRYSTALLOGRAPHY (2.2 ANGSTROMS) OF 1-377</scope>
    <scope>STRUCTURE BY ELECTRON MICROSCOPY (12.0 ANGSTROMS) OF 1-377</scope>
    <scope>SUBUNIT</scope>
    <scope>BAR DOMAIN</scope>
    <scope>PH DOMAIN</scope>
    <scope>MUTAGENESIS OF PHE-280</scope>
</reference>
<reference key="12">
    <citation type="journal article" date="2006" name="Science">
        <title>The consensus coding sequences of human breast and colorectal cancers.</title>
        <authorList>
            <person name="Sjoeblom T."/>
            <person name="Jones S."/>
            <person name="Wood L.D."/>
            <person name="Parsons D.W."/>
            <person name="Lin J."/>
            <person name="Barber T.D."/>
            <person name="Mandelker D."/>
            <person name="Leary R.J."/>
            <person name="Ptak J."/>
            <person name="Silliman N."/>
            <person name="Szabo S."/>
            <person name="Buckhaults P."/>
            <person name="Farrell C."/>
            <person name="Meeh P."/>
            <person name="Markowitz S.D."/>
            <person name="Willis J."/>
            <person name="Dawson D."/>
            <person name="Willson J.K.V."/>
            <person name="Gazdar A.F."/>
            <person name="Hartigan J."/>
            <person name="Wu L."/>
            <person name="Liu C."/>
            <person name="Parmigiani G."/>
            <person name="Park B.H."/>
            <person name="Bachman K.E."/>
            <person name="Papadopoulos N."/>
            <person name="Vogelstein B."/>
            <person name="Kinzler K.W."/>
            <person name="Velculescu V.E."/>
        </authorList>
    </citation>
    <scope>VARIANTS [LARGE SCALE ANALYSIS] ARG-114 AND GLN-129</scope>
</reference>
<gene>
    <name type="primary">ACAP1</name>
    <name type="synonym">CENTB1</name>
    <name type="synonym">KIAA0050</name>
</gene>
<sequence length="740" mass="81536">MTVKLDFEECLKDSPRFRASIELVEAEVSELETRLEKLLKLGTGLLESGRHYLAASRAFVVGICDLARLGPPEPMMAECLEKFTVSLNHKLDSHAELLDATQHTLQQQIQTLVKEGLRGFREARRDFWRGAESLEAALTHNAEVPRRRAQEAEEAGAALRTARAGYRGRALDYALQINVIEDKRKFDIMEFVLRLVEAQATHFQQGHEELSRLSQYRKELGAQLHQLVLNSAREKRDMEQRHVLLKQKELGGEEPEPSLREGPGGLVMEGHLFKRASNAFKTWSRRWFTIQSNQLVYQKKYKDPVTVVVDDLRLCTVKLCPDSERRFCFEVVSTSKSCLLQADSERLLQLWVSAVQSSIASAFSQARLDDSPRGPGQGSGHLAIGSAATLGSGGMARGREPGGVGHVVAQVQSVDGNAQCCDCREPAPEWASINLGVTLCIQCSGIHRSLGVHFSKVRSLTLDSWEPELVKLMCELGNVIINQIYEARVEAMAVKKPGPSCSRQEKEAWIHAKYVEKKFLTKLPEIRGRRGGRGRPRGQPPVPPKPSIRPRPGSLRSKPEPPSEDLGSLHPGALLFRASGHPPSLPTMADALAHGADVNWVNGGQDNATPLIQATAANSLLACEFLLQNGANVNQADSAGRGPLHHATILGHTGLACLFLKRGADLGARDSEGRDPLTIAMETANADIVTLLRLAKMREAEAAQGQAGDETYLDIFRDFSLMASDDPEKLSRRSHDLHTL</sequence>
<keyword id="KW-0002">3D-structure</keyword>
<keyword id="KW-0040">ANK repeat</keyword>
<keyword id="KW-0967">Endosome</keyword>
<keyword id="KW-0343">GTPase activation</keyword>
<keyword id="KW-0472">Membrane</keyword>
<keyword id="KW-0479">Metal-binding</keyword>
<keyword id="KW-0944">Nitration</keyword>
<keyword id="KW-0597">Phosphoprotein</keyword>
<keyword id="KW-0653">Protein transport</keyword>
<keyword id="KW-1267">Proteomics identification</keyword>
<keyword id="KW-1185">Reference proteome</keyword>
<keyword id="KW-0677">Repeat</keyword>
<keyword id="KW-0813">Transport</keyword>
<keyword id="KW-0862">Zinc</keyword>
<keyword id="KW-0863">Zinc-finger</keyword>
<organism>
    <name type="scientific">Homo sapiens</name>
    <name type="common">Human</name>
    <dbReference type="NCBI Taxonomy" id="9606"/>
    <lineage>
        <taxon>Eukaryota</taxon>
        <taxon>Metazoa</taxon>
        <taxon>Chordata</taxon>
        <taxon>Craniata</taxon>
        <taxon>Vertebrata</taxon>
        <taxon>Euteleostomi</taxon>
        <taxon>Mammalia</taxon>
        <taxon>Eutheria</taxon>
        <taxon>Euarchontoglires</taxon>
        <taxon>Primates</taxon>
        <taxon>Haplorrhini</taxon>
        <taxon>Catarrhini</taxon>
        <taxon>Hominidae</taxon>
        <taxon>Homo</taxon>
    </lineage>
</organism>
<proteinExistence type="evidence at protein level"/>
<feature type="chain" id="PRO_0000074209" description="Arf-GAP with coiled-coil, ANK repeat and PH domain-containing protein 1">
    <location>
        <begin position="1"/>
        <end position="740"/>
    </location>
</feature>
<feature type="domain" description="BAR">
    <location>
        <begin position="1"/>
        <end position="226"/>
    </location>
</feature>
<feature type="domain" description="PH" evidence="1">
    <location>
        <begin position="265"/>
        <end position="360"/>
    </location>
</feature>
<feature type="domain" description="Arf-GAP" evidence="2">
    <location>
        <begin position="405"/>
        <end position="527"/>
    </location>
</feature>
<feature type="repeat" description="ANK 1">
    <location>
        <begin position="606"/>
        <end position="635"/>
    </location>
</feature>
<feature type="repeat" description="ANK 2">
    <location>
        <begin position="639"/>
        <end position="668"/>
    </location>
</feature>
<feature type="repeat" description="ANK 3">
    <location>
        <begin position="672"/>
        <end position="702"/>
    </location>
</feature>
<feature type="zinc finger region" description="C4-type" evidence="2">
    <location>
        <begin position="420"/>
        <end position="443"/>
    </location>
</feature>
<feature type="region of interest" description="Required for formation of endosomal tubules when overexpressed with PIP5K1C">
    <location>
        <begin position="1"/>
        <end position="382"/>
    </location>
</feature>
<feature type="region of interest" description="Required for interaction with GULP1">
    <location>
        <begin position="405"/>
        <end position="740"/>
    </location>
</feature>
<feature type="region of interest" description="Disordered" evidence="3">
    <location>
        <begin position="525"/>
        <end position="581"/>
    </location>
</feature>
<feature type="region of interest" description="Prevents interaction with ITGB1 when S-554 is not phosphorylated">
    <location>
        <begin position="525"/>
        <end position="566"/>
    </location>
</feature>
<feature type="compositionally biased region" description="Pro residues" evidence="3">
    <location>
        <begin position="538"/>
        <end position="549"/>
    </location>
</feature>
<feature type="modified residue" description="3'-nitrotyrosine" evidence="13">
    <location>
        <position position="485"/>
    </location>
</feature>
<feature type="modified residue" description="Phosphoserine; by PKB" evidence="5">
    <location>
        <position position="554"/>
    </location>
</feature>
<feature type="sequence variant" id="VAR_048328" description="In dbSNP:rs35933585.">
    <original>R</original>
    <variation>C</variation>
    <location>
        <position position="68"/>
    </location>
</feature>
<feature type="sequence variant" id="VAR_036178" description="In a breast cancer sample; somatic mutation; dbSNP:rs759855054." evidence="6">
    <original>K</original>
    <variation>R</variation>
    <location>
        <position position="114"/>
    </location>
</feature>
<feature type="sequence variant" id="VAR_036179" description="In a colorectal cancer sample; somatic mutation; dbSNP:rs754740225." evidence="6">
    <original>R</original>
    <variation>Q</variation>
    <location>
        <position position="129"/>
    </location>
</feature>
<feature type="sequence variant" id="VAR_048329" description="In dbSNP:rs35019942.">
    <original>R</original>
    <variation>W</variation>
    <location>
        <position position="533"/>
    </location>
</feature>
<feature type="mutagenesis site" description="No effect on interaction with ITGB1." evidence="5">
    <original>S</original>
    <variation>A</variation>
    <location>
        <position position="14"/>
    </location>
</feature>
<feature type="mutagenesis site" description="No effect on interaction with ITGB1." evidence="5">
    <original>S</original>
    <variation>A</variation>
    <location>
        <position position="29"/>
    </location>
</feature>
<feature type="mutagenesis site" description="Loss of binding to PIP2 and PIP3. Loss of association with endosomal tubules when coexpressed with PIP5K1C." evidence="7">
    <original>K</original>
    <variation>N</variation>
    <location>
        <position position="274"/>
    </location>
</feature>
<feature type="mutagenesis site" description="No effect on interaction with ITGB1." evidence="5">
    <original>S</original>
    <variation>A</variation>
    <location>
        <position position="277"/>
    </location>
</feature>
<feature type="mutagenesis site" description="Reduced membrane binding and ability to induce liposome tubulation." evidence="11">
    <original>F</original>
    <variation>A</variation>
    <location>
        <position position="280"/>
    </location>
</feature>
<feature type="mutagenesis site" description="Almost abolishes membrane binding." evidence="11">
    <original>F</original>
    <variation>E</variation>
    <location>
        <position position="280"/>
    </location>
</feature>
<feature type="mutagenesis site" description="Preserves membrane binding and ability to tubulate liposomes." evidence="11">
    <original>F</original>
    <variation>W</variation>
    <location>
        <position position="280"/>
    </location>
</feature>
<feature type="mutagenesis site" description="No effect on interaction with ITGB1." evidence="5">
    <original>T</original>
    <variation>A</variation>
    <location>
        <position position="289"/>
    </location>
</feature>
<feature type="mutagenesis site" description="No effect on interaction with ITGB1." evidence="5">
    <original>S</original>
    <variation>A</variation>
    <location>
        <position position="358"/>
    </location>
</feature>
<feature type="mutagenesis site" description="No effect on interaction with ITGB1." evidence="5">
    <original>T</original>
    <variation>A</variation>
    <location>
        <position position="389"/>
    </location>
</feature>
<feature type="mutagenesis site" description="Loss of GAP activity. No effect on GULP1 binding or association with endosomal tubules when coexpressed with PIP5K1C." evidence="4 8">
    <original>R</original>
    <variation>Q</variation>
    <location>
        <position position="448"/>
    </location>
</feature>
<feature type="mutagenesis site" description="No effect on interaction with ITGB1." evidence="5">
    <original>T</original>
    <variation>A</variation>
    <location>
        <position position="461"/>
    </location>
</feature>
<feature type="mutagenesis site" description="Loss of phosphorylation by PKB, interaction with ITGB1 and ITGB1-dependent cell migration." evidence="5 10">
    <original>S</original>
    <variation>A</variation>
    <location>
        <position position="554"/>
    </location>
</feature>
<feature type="mutagenesis site" description="Enhances interaction with ITGB1." evidence="5 10">
    <original>S</original>
    <variation>D</variation>
    <location>
        <position position="554"/>
    </location>
</feature>
<feature type="mutagenesis site" description="No effect on interaction with ITGB1." evidence="5">
    <original>S</original>
    <variation>A</variation>
    <location>
        <position position="568"/>
    </location>
</feature>
<feature type="mutagenesis site" description="No effect on interaction with ITGB1." evidence="5">
    <original>T</original>
    <variation>A</variation>
    <location>
        <position position="711"/>
    </location>
</feature>
<feature type="mutagenesis site" description="No effect on interaction with ITGB1." evidence="5">
    <original>Y</original>
    <variation>F</variation>
    <location>
        <position position="712"/>
    </location>
</feature>
<feature type="mutagenesis site" description="Loss of phosphorylation at S-554, interaction with ITGB1 and ITGB1-dependent cell migration." evidence="5">
    <original>S</original>
    <variation>A</variation>
    <location>
        <position position="724"/>
    </location>
</feature>
<feature type="mutagenesis site" description="Enhances interaction with ITGB1." evidence="5">
    <original>S</original>
    <variation>D</variation>
    <location>
        <position position="724"/>
    </location>
</feature>
<feature type="strand" evidence="16">
    <location>
        <begin position="1"/>
        <end position="4"/>
    </location>
</feature>
<feature type="helix" evidence="16">
    <location>
        <begin position="7"/>
        <end position="12"/>
    </location>
</feature>
<feature type="helix" evidence="16">
    <location>
        <begin position="15"/>
        <end position="68"/>
    </location>
</feature>
<feature type="strand" evidence="16">
    <location>
        <begin position="69"/>
        <end position="71"/>
    </location>
</feature>
<feature type="helix" evidence="16">
    <location>
        <begin position="74"/>
        <end position="113"/>
    </location>
</feature>
<feature type="helix" evidence="16">
    <location>
        <begin position="115"/>
        <end position="117"/>
    </location>
</feature>
<feature type="helix" evidence="16">
    <location>
        <begin position="118"/>
        <end position="143"/>
    </location>
</feature>
<feature type="helix" evidence="16">
    <location>
        <begin position="149"/>
        <end position="212"/>
    </location>
</feature>
<feature type="helix" evidence="16">
    <location>
        <begin position="214"/>
        <end position="248"/>
    </location>
</feature>
<feature type="strand" evidence="16">
    <location>
        <begin position="258"/>
        <end position="260"/>
    </location>
</feature>
<feature type="strand" evidence="16">
    <location>
        <begin position="263"/>
        <end position="265"/>
    </location>
</feature>
<feature type="strand" evidence="16">
    <location>
        <begin position="267"/>
        <end position="275"/>
    </location>
</feature>
<feature type="turn" evidence="16">
    <location>
        <begin position="277"/>
        <end position="279"/>
    </location>
</feature>
<feature type="strand" evidence="16">
    <location>
        <begin position="283"/>
        <end position="291"/>
    </location>
</feature>
<feature type="strand" evidence="16">
    <location>
        <begin position="294"/>
        <end position="303"/>
    </location>
</feature>
<feature type="strand" evidence="16">
    <location>
        <begin position="306"/>
        <end position="310"/>
    </location>
</feature>
<feature type="helix" evidence="16">
    <location>
        <begin position="312"/>
        <end position="314"/>
    </location>
</feature>
<feature type="strand" evidence="16">
    <location>
        <begin position="315"/>
        <end position="319"/>
    </location>
</feature>
<feature type="strand" evidence="16">
    <location>
        <begin position="323"/>
        <end position="325"/>
    </location>
</feature>
<feature type="strand" evidence="16">
    <location>
        <begin position="328"/>
        <end position="335"/>
    </location>
</feature>
<feature type="strand" evidence="16">
    <location>
        <begin position="337"/>
        <end position="341"/>
    </location>
</feature>
<feature type="helix" evidence="16">
    <location>
        <begin position="345"/>
        <end position="361"/>
    </location>
</feature>
<feature type="helix" evidence="14">
    <location>
        <begin position="407"/>
        <end position="412"/>
    </location>
</feature>
<feature type="turn" evidence="14">
    <location>
        <begin position="415"/>
        <end position="418"/>
    </location>
</feature>
<feature type="turn" evidence="14">
    <location>
        <begin position="421"/>
        <end position="423"/>
    </location>
</feature>
<feature type="strand" evidence="14">
    <location>
        <begin position="430"/>
        <end position="432"/>
    </location>
</feature>
<feature type="turn" evidence="14">
    <location>
        <begin position="433"/>
        <end position="436"/>
    </location>
</feature>
<feature type="strand" evidence="14">
    <location>
        <begin position="437"/>
        <end position="439"/>
    </location>
</feature>
<feature type="helix" evidence="14">
    <location>
        <begin position="441"/>
        <end position="450"/>
    </location>
</feature>
<feature type="turn" evidence="14">
    <location>
        <begin position="452"/>
        <end position="454"/>
    </location>
</feature>
<feature type="strand" evidence="14">
    <location>
        <begin position="457"/>
        <end position="459"/>
    </location>
</feature>
<feature type="turn" evidence="14">
    <location>
        <begin position="460"/>
        <end position="462"/>
    </location>
</feature>
<feature type="helix" evidence="14">
    <location>
        <begin position="467"/>
        <end position="475"/>
    </location>
</feature>
<feature type="helix" evidence="14">
    <location>
        <begin position="478"/>
        <end position="485"/>
    </location>
</feature>
<feature type="turn" evidence="14">
    <location>
        <begin position="486"/>
        <end position="493"/>
    </location>
</feature>
<feature type="helix" evidence="14">
    <location>
        <begin position="503"/>
        <end position="514"/>
    </location>
</feature>
<feature type="helix" evidence="14">
    <location>
        <begin position="571"/>
        <end position="578"/>
    </location>
</feature>
<feature type="strand" evidence="14">
    <location>
        <begin position="580"/>
        <end position="582"/>
    </location>
</feature>
<feature type="helix" evidence="14">
    <location>
        <begin position="585"/>
        <end position="593"/>
    </location>
</feature>
<feature type="turn" evidence="14">
    <location>
        <begin position="603"/>
        <end position="606"/>
    </location>
</feature>
<feature type="helix" evidence="14">
    <location>
        <begin position="610"/>
        <end position="616"/>
    </location>
</feature>
<feature type="helix" evidence="14">
    <location>
        <begin position="620"/>
        <end position="628"/>
    </location>
</feature>
<feature type="helix" evidence="14">
    <location>
        <begin position="643"/>
        <end position="650"/>
    </location>
</feature>
<feature type="helix" evidence="14">
    <location>
        <begin position="653"/>
        <end position="661"/>
    </location>
</feature>
<feature type="helix" evidence="14">
    <location>
        <begin position="676"/>
        <end position="682"/>
    </location>
</feature>
<feature type="helix" evidence="14">
    <location>
        <begin position="686"/>
        <end position="696"/>
    </location>
</feature>
<feature type="helix" evidence="15">
    <location>
        <begin position="713"/>
        <end position="720"/>
    </location>
</feature>
<dbReference type="EMBL" id="D30758">
    <property type="protein sequence ID" value="BAA06418.2"/>
    <property type="status" value="ALT_INIT"/>
    <property type="molecule type" value="mRNA"/>
</dbReference>
<dbReference type="EMBL" id="BT009788">
    <property type="protein sequence ID" value="AAP88790.1"/>
    <property type="molecule type" value="mRNA"/>
</dbReference>
<dbReference type="EMBL" id="BC018543">
    <property type="protein sequence ID" value="AAH18543.1"/>
    <property type="molecule type" value="mRNA"/>
</dbReference>
<dbReference type="CCDS" id="CCDS11101.1"/>
<dbReference type="RefSeq" id="NP_055531.1">
    <property type="nucleotide sequence ID" value="NM_014716.4"/>
</dbReference>
<dbReference type="PDB" id="3JUE">
    <property type="method" value="X-ray"/>
    <property type="resolution" value="2.30 A"/>
    <property type="chains" value="A/B=378-740"/>
</dbReference>
<dbReference type="PDB" id="3T9K">
    <property type="method" value="X-ray"/>
    <property type="resolution" value="2.30 A"/>
    <property type="chains" value="A/B=378-740"/>
</dbReference>
<dbReference type="PDB" id="4CKG">
    <property type="method" value="EM"/>
    <property type="resolution" value="12.00 A"/>
    <property type="chains" value="A/B/C/D=1-377"/>
</dbReference>
<dbReference type="PDB" id="4CKH">
    <property type="method" value="EM"/>
    <property type="resolution" value="14.00 A"/>
    <property type="chains" value="A/B/C/D=1-377"/>
</dbReference>
<dbReference type="PDB" id="4F1P">
    <property type="method" value="X-ray"/>
    <property type="resolution" value="2.30 A"/>
    <property type="chains" value="A/B=378-740"/>
</dbReference>
<dbReference type="PDB" id="4NSW">
    <property type="method" value="X-ray"/>
    <property type="resolution" value="2.20 A"/>
    <property type="chains" value="A/B=1-377"/>
</dbReference>
<dbReference type="PDB" id="5H3D">
    <property type="method" value="EM"/>
    <property type="resolution" value="14.00 A"/>
    <property type="chains" value="A/B/C/D=1-377"/>
</dbReference>
<dbReference type="PDBsum" id="3JUE"/>
<dbReference type="PDBsum" id="3T9K"/>
<dbReference type="PDBsum" id="4CKG"/>
<dbReference type="PDBsum" id="4CKH"/>
<dbReference type="PDBsum" id="4F1P"/>
<dbReference type="PDBsum" id="4NSW"/>
<dbReference type="PDBsum" id="5H3D"/>
<dbReference type="EMDB" id="EMD-2546"/>
<dbReference type="EMDB" id="EMD-2547"/>
<dbReference type="SMR" id="Q15027"/>
<dbReference type="BioGRID" id="115092">
    <property type="interactions" value="17"/>
</dbReference>
<dbReference type="CORUM" id="Q15027"/>
<dbReference type="FunCoup" id="Q15027">
    <property type="interactions" value="564"/>
</dbReference>
<dbReference type="IntAct" id="Q15027">
    <property type="interactions" value="17"/>
</dbReference>
<dbReference type="MINT" id="Q15027"/>
<dbReference type="STRING" id="9606.ENSP00000158762"/>
<dbReference type="GlyCosmos" id="Q15027">
    <property type="glycosylation" value="2 sites, 2 glycans"/>
</dbReference>
<dbReference type="GlyGen" id="Q15027">
    <property type="glycosylation" value="4 sites, 2 O-linked glycans (4 sites)"/>
</dbReference>
<dbReference type="iPTMnet" id="Q15027"/>
<dbReference type="PhosphoSitePlus" id="Q15027"/>
<dbReference type="BioMuta" id="ACAP1"/>
<dbReference type="DMDM" id="3183210"/>
<dbReference type="jPOST" id="Q15027"/>
<dbReference type="MassIVE" id="Q15027"/>
<dbReference type="PaxDb" id="9606-ENSP00000158762"/>
<dbReference type="PeptideAtlas" id="Q15027"/>
<dbReference type="ProteomicsDB" id="60378"/>
<dbReference type="Pumba" id="Q15027"/>
<dbReference type="Antibodypedia" id="24069">
    <property type="antibodies" value="235 antibodies from 33 providers"/>
</dbReference>
<dbReference type="DNASU" id="9744"/>
<dbReference type="Ensembl" id="ENST00000158762.8">
    <property type="protein sequence ID" value="ENSP00000158762.3"/>
    <property type="gene ID" value="ENSG00000072818.12"/>
</dbReference>
<dbReference type="Ensembl" id="ENST00000672212.1">
    <property type="protein sequence ID" value="ENSP00000499859.1"/>
    <property type="gene ID" value="ENSG00000288169.1"/>
</dbReference>
<dbReference type="GeneID" id="9744"/>
<dbReference type="KEGG" id="hsa:9744"/>
<dbReference type="MANE-Select" id="ENST00000158762.8">
    <property type="protein sequence ID" value="ENSP00000158762.3"/>
    <property type="RefSeq nucleotide sequence ID" value="NM_014716.4"/>
    <property type="RefSeq protein sequence ID" value="NP_055531.1"/>
</dbReference>
<dbReference type="UCSC" id="uc002ggd.3">
    <property type="organism name" value="human"/>
</dbReference>
<dbReference type="AGR" id="HGNC:16467"/>
<dbReference type="CTD" id="9744"/>
<dbReference type="DisGeNET" id="9744"/>
<dbReference type="GeneCards" id="ACAP1"/>
<dbReference type="HGNC" id="HGNC:16467">
    <property type="gene designation" value="ACAP1"/>
</dbReference>
<dbReference type="HPA" id="ENSG00000072818">
    <property type="expression patterns" value="Tissue enhanced (bone marrow, intestine, lymphoid tissue)"/>
</dbReference>
<dbReference type="MIM" id="607763">
    <property type="type" value="gene"/>
</dbReference>
<dbReference type="neXtProt" id="NX_Q15027"/>
<dbReference type="OpenTargets" id="ENSG00000072818"/>
<dbReference type="PharmGKB" id="PA26406"/>
<dbReference type="VEuPathDB" id="HostDB:ENSG00000072818"/>
<dbReference type="eggNOG" id="KOG0521">
    <property type="taxonomic scope" value="Eukaryota"/>
</dbReference>
<dbReference type="GeneTree" id="ENSGT00940000160289"/>
<dbReference type="HOGENOM" id="CLU_012513_0_0_1"/>
<dbReference type="InParanoid" id="Q15027"/>
<dbReference type="OMA" id="QYCAHSK"/>
<dbReference type="OrthoDB" id="10070851at2759"/>
<dbReference type="PAN-GO" id="Q15027">
    <property type="GO annotations" value="0 GO annotations based on evolutionary models"/>
</dbReference>
<dbReference type="PhylomeDB" id="Q15027"/>
<dbReference type="TreeFam" id="TF318315"/>
<dbReference type="PathwayCommons" id="Q15027"/>
<dbReference type="SignaLink" id="Q15027"/>
<dbReference type="SIGNOR" id="Q15027"/>
<dbReference type="BioGRID-ORCS" id="9744">
    <property type="hits" value="9 hits in 1152 CRISPR screens"/>
</dbReference>
<dbReference type="CD-CODE" id="DEE660B4">
    <property type="entry name" value="Stress granule"/>
</dbReference>
<dbReference type="ChiTaRS" id="ACAP1">
    <property type="organism name" value="human"/>
</dbReference>
<dbReference type="EvolutionaryTrace" id="Q15027"/>
<dbReference type="GeneWiki" id="CENTB1"/>
<dbReference type="GenomeRNAi" id="9744"/>
<dbReference type="Pharos" id="Q15027">
    <property type="development level" value="Tbio"/>
</dbReference>
<dbReference type="PRO" id="PR:Q15027"/>
<dbReference type="Proteomes" id="UP000005640">
    <property type="component" value="Chromosome 17"/>
</dbReference>
<dbReference type="RNAct" id="Q15027">
    <property type="molecule type" value="protein"/>
</dbReference>
<dbReference type="Bgee" id="ENSG00000072818">
    <property type="expression patterns" value="Expressed in granulocyte and 94 other cell types or tissues"/>
</dbReference>
<dbReference type="ExpressionAtlas" id="Q15027">
    <property type="expression patterns" value="baseline and differential"/>
</dbReference>
<dbReference type="GO" id="GO:0016020">
    <property type="term" value="C:membrane"/>
    <property type="evidence" value="ECO:0007005"/>
    <property type="project" value="UniProtKB"/>
</dbReference>
<dbReference type="GO" id="GO:0055038">
    <property type="term" value="C:recycling endosome membrane"/>
    <property type="evidence" value="ECO:0007669"/>
    <property type="project" value="UniProtKB-SubCell"/>
</dbReference>
<dbReference type="GO" id="GO:0005096">
    <property type="term" value="F:GTPase activator activity"/>
    <property type="evidence" value="ECO:0007669"/>
    <property type="project" value="UniProtKB-KW"/>
</dbReference>
<dbReference type="GO" id="GO:0008270">
    <property type="term" value="F:zinc ion binding"/>
    <property type="evidence" value="ECO:0007669"/>
    <property type="project" value="UniProtKB-KW"/>
</dbReference>
<dbReference type="GO" id="GO:0015031">
    <property type="term" value="P:protein transport"/>
    <property type="evidence" value="ECO:0007669"/>
    <property type="project" value="UniProtKB-KW"/>
</dbReference>
<dbReference type="CDD" id="cd08852">
    <property type="entry name" value="ArfGap_ACAP1"/>
    <property type="match status" value="1"/>
</dbReference>
<dbReference type="CDD" id="cd13250">
    <property type="entry name" value="PH_ACAP"/>
    <property type="match status" value="1"/>
</dbReference>
<dbReference type="FunFam" id="1.20.1270.60:FF:000062">
    <property type="entry name" value="Arf-GAP with coiled-coil, ANK repeat and PH domain-containing protein 1"/>
    <property type="match status" value="1"/>
</dbReference>
<dbReference type="FunFam" id="1.10.220.150:FF:000007">
    <property type="entry name" value="Arf-GAP with coiled-coil, ANK repeat and PH domain-containing protein 2"/>
    <property type="match status" value="1"/>
</dbReference>
<dbReference type="FunFam" id="1.25.40.20:FF:000020">
    <property type="entry name" value="Arf-GAP with coiled-coil, ANK repeat and PH domain-containing protein 2"/>
    <property type="match status" value="1"/>
</dbReference>
<dbReference type="FunFam" id="2.30.29.30:FF:000026">
    <property type="entry name" value="Arf-GAP with coiled-coil, ANK repeat and PH domain-containing protein 2"/>
    <property type="match status" value="1"/>
</dbReference>
<dbReference type="Gene3D" id="1.25.40.20">
    <property type="entry name" value="Ankyrin repeat-containing domain"/>
    <property type="match status" value="1"/>
</dbReference>
<dbReference type="Gene3D" id="1.10.220.150">
    <property type="entry name" value="Arf GTPase activating protein"/>
    <property type="match status" value="1"/>
</dbReference>
<dbReference type="Gene3D" id="1.20.1270.60">
    <property type="entry name" value="Arfaptin homology (AH) domain/BAR domain"/>
    <property type="match status" value="1"/>
</dbReference>
<dbReference type="Gene3D" id="2.30.29.30">
    <property type="entry name" value="Pleckstrin-homology domain (PH domain)/Phosphotyrosine-binding domain (PTB)"/>
    <property type="match status" value="1"/>
</dbReference>
<dbReference type="InterPro" id="IPR045258">
    <property type="entry name" value="ACAP1/2/3-like"/>
</dbReference>
<dbReference type="InterPro" id="IPR027267">
    <property type="entry name" value="AH/BAR_dom_sf"/>
</dbReference>
<dbReference type="InterPro" id="IPR002110">
    <property type="entry name" value="Ankyrin_rpt"/>
</dbReference>
<dbReference type="InterPro" id="IPR036770">
    <property type="entry name" value="Ankyrin_rpt-contain_sf"/>
</dbReference>
<dbReference type="InterPro" id="IPR037278">
    <property type="entry name" value="ARFGAP/RecO"/>
</dbReference>
<dbReference type="InterPro" id="IPR001164">
    <property type="entry name" value="ArfGAP_dom"/>
</dbReference>
<dbReference type="InterPro" id="IPR038508">
    <property type="entry name" value="ArfGAP_dom_sf"/>
</dbReference>
<dbReference type="InterPro" id="IPR004148">
    <property type="entry name" value="BAR_dom"/>
</dbReference>
<dbReference type="InterPro" id="IPR011993">
    <property type="entry name" value="PH-like_dom_sf"/>
</dbReference>
<dbReference type="InterPro" id="IPR001849">
    <property type="entry name" value="PH_domain"/>
</dbReference>
<dbReference type="PANTHER" id="PTHR23180:SF197">
    <property type="entry name" value="ARF-GAP WITH COILED-COIL, ANK REPEAT AND PH DOMAIN-CONTAINING PROTEIN 1"/>
    <property type="match status" value="1"/>
</dbReference>
<dbReference type="PANTHER" id="PTHR23180">
    <property type="entry name" value="CENTAURIN/ARF"/>
    <property type="match status" value="1"/>
</dbReference>
<dbReference type="Pfam" id="PF12796">
    <property type="entry name" value="Ank_2"/>
    <property type="match status" value="1"/>
</dbReference>
<dbReference type="Pfam" id="PF01412">
    <property type="entry name" value="ArfGap"/>
    <property type="match status" value="1"/>
</dbReference>
<dbReference type="Pfam" id="PF16746">
    <property type="entry name" value="BAR_3"/>
    <property type="match status" value="1"/>
</dbReference>
<dbReference type="Pfam" id="PF00169">
    <property type="entry name" value="PH"/>
    <property type="match status" value="1"/>
</dbReference>
<dbReference type="PRINTS" id="PR00405">
    <property type="entry name" value="REVINTRACTNG"/>
</dbReference>
<dbReference type="SMART" id="SM00248">
    <property type="entry name" value="ANK"/>
    <property type="match status" value="3"/>
</dbReference>
<dbReference type="SMART" id="SM00105">
    <property type="entry name" value="ArfGap"/>
    <property type="match status" value="1"/>
</dbReference>
<dbReference type="SMART" id="SM00233">
    <property type="entry name" value="PH"/>
    <property type="match status" value="1"/>
</dbReference>
<dbReference type="SUPFAM" id="SSF48403">
    <property type="entry name" value="Ankyrin repeat"/>
    <property type="match status" value="1"/>
</dbReference>
<dbReference type="SUPFAM" id="SSF57863">
    <property type="entry name" value="ArfGap/RecO-like zinc finger"/>
    <property type="match status" value="1"/>
</dbReference>
<dbReference type="SUPFAM" id="SSF103657">
    <property type="entry name" value="BAR/IMD domain-like"/>
    <property type="match status" value="1"/>
</dbReference>
<dbReference type="SUPFAM" id="SSF50729">
    <property type="entry name" value="PH domain-like"/>
    <property type="match status" value="1"/>
</dbReference>
<dbReference type="PROSITE" id="PS50297">
    <property type="entry name" value="ANK_REP_REGION"/>
    <property type="match status" value="1"/>
</dbReference>
<dbReference type="PROSITE" id="PS50088">
    <property type="entry name" value="ANK_REPEAT"/>
    <property type="match status" value="2"/>
</dbReference>
<dbReference type="PROSITE" id="PS50115">
    <property type="entry name" value="ARFGAP"/>
    <property type="match status" value="1"/>
</dbReference>
<dbReference type="PROSITE" id="PS50003">
    <property type="entry name" value="PH_DOMAIN"/>
    <property type="match status" value="1"/>
</dbReference>